<gene>
    <name evidence="2" type="primary">EEF1AKMT1</name>
    <name evidence="2" type="synonym">N6AMT2</name>
    <name type="ORF">RCJMB04_9d5</name>
</gene>
<sequence length="213" mass="24079">MDDDDDDIPQLSSHTLAALQEFYLEQQQREGMKTSQGFNQYSVGSIEEDWQLSQFWYSDETASCLANEAIVAAGKGGRIACVSAPSVYQKLREQGGADFSVCILEYDRRFSVYGEEFIFYDYNNPLNLPEHLLPHSFDIVVADPPYLSEECLQKTAETIKYLTKGKILLCTGAIMEEQAAKHLGVKICKFIPKHSRNLANEFRCYVNYASGLD</sequence>
<keyword id="KW-0963">Cytoplasm</keyword>
<keyword id="KW-0489">Methyltransferase</keyword>
<keyword id="KW-1185">Reference proteome</keyword>
<keyword id="KW-0808">Transferase</keyword>
<feature type="chain" id="PRO_0000311296" description="EEF1A lysine methyltransferase 1">
    <location>
        <begin position="1"/>
        <end position="213"/>
    </location>
</feature>
<comment type="function">
    <text evidence="2">Protein-lysine methyltransferase that selectively catalyzes the trimethylation of EEF1A at 'Lys-79'.</text>
</comment>
<comment type="catalytic activity">
    <reaction evidence="1">
        <text>L-lysyl-[protein] + 3 S-adenosyl-L-methionine = N(6),N(6),N(6)-trimethyl-L-lysyl-[protein] + 3 S-adenosyl-L-homocysteine + 3 H(+)</text>
        <dbReference type="Rhea" id="RHEA:54192"/>
        <dbReference type="Rhea" id="RHEA-COMP:9752"/>
        <dbReference type="Rhea" id="RHEA-COMP:13826"/>
        <dbReference type="ChEBI" id="CHEBI:15378"/>
        <dbReference type="ChEBI" id="CHEBI:29969"/>
        <dbReference type="ChEBI" id="CHEBI:57856"/>
        <dbReference type="ChEBI" id="CHEBI:59789"/>
        <dbReference type="ChEBI" id="CHEBI:61961"/>
    </reaction>
    <physiologicalReaction direction="left-to-right" evidence="1">
        <dbReference type="Rhea" id="RHEA:54193"/>
    </physiologicalReaction>
</comment>
<comment type="subcellular location">
    <subcellularLocation>
        <location evidence="2">Cytoplasm</location>
    </subcellularLocation>
</comment>
<comment type="similarity">
    <text evidence="2">Belongs to the class I-like SAM-binding methyltransferase superfamily. EFM5 family.</text>
</comment>
<comment type="caution">
    <text evidence="2">Was originally thought to be an N(6)-adenine-specific DNA methyltransferase based on primary sequence and predicted secondary structure.</text>
</comment>
<name>EFMT1_CHICK</name>
<dbReference type="EC" id="2.1.1.-" evidence="2"/>
<dbReference type="EMBL" id="AJ719998">
    <property type="protein sequence ID" value="CAG31657.1"/>
    <property type="molecule type" value="mRNA"/>
</dbReference>
<dbReference type="RefSeq" id="NP_001006277.1">
    <property type="nucleotide sequence ID" value="NM_001006277.2"/>
</dbReference>
<dbReference type="RefSeq" id="XP_015133532.1">
    <property type="nucleotide sequence ID" value="XM_015278046.1"/>
</dbReference>
<dbReference type="RefSeq" id="XP_040556106.1">
    <property type="nucleotide sequence ID" value="XM_040700172.2"/>
</dbReference>
<dbReference type="RefSeq" id="XP_046764276.1">
    <property type="nucleotide sequence ID" value="XM_046908320.1"/>
</dbReference>
<dbReference type="RefSeq" id="XP_046764277.1">
    <property type="nucleotide sequence ID" value="XM_046908321.1"/>
</dbReference>
<dbReference type="RefSeq" id="XP_046764278.1">
    <property type="nucleotide sequence ID" value="XM_046908322.1"/>
</dbReference>
<dbReference type="RefSeq" id="XP_046764279.1">
    <property type="nucleotide sequence ID" value="XM_046908323.1"/>
</dbReference>
<dbReference type="RefSeq" id="XP_046797903.1">
    <property type="nucleotide sequence ID" value="XM_046941947.1"/>
</dbReference>
<dbReference type="RefSeq" id="XP_046797905.1">
    <property type="nucleotide sequence ID" value="XM_046941949.1"/>
</dbReference>
<dbReference type="RefSeq" id="XP_046797907.1">
    <property type="nucleotide sequence ID" value="XM_046941951.1"/>
</dbReference>
<dbReference type="SMR" id="Q5ZKT6"/>
<dbReference type="FunCoup" id="Q5ZKT6">
    <property type="interactions" value="186"/>
</dbReference>
<dbReference type="STRING" id="9031.ENSGALP00000074055"/>
<dbReference type="PaxDb" id="9031-ENSGALP00000027624"/>
<dbReference type="Ensembl" id="ENSGALT00010013193.1">
    <property type="protein sequence ID" value="ENSGALP00010007755.1"/>
    <property type="gene ID" value="ENSGALG00010005514.1"/>
</dbReference>
<dbReference type="GeneID" id="418951"/>
<dbReference type="KEGG" id="gga:418951"/>
<dbReference type="CTD" id="221143"/>
<dbReference type="VEuPathDB" id="HostDB:geneid_418951"/>
<dbReference type="eggNOG" id="KOG3350">
    <property type="taxonomic scope" value="Eukaryota"/>
</dbReference>
<dbReference type="GeneTree" id="ENSGT00390000016366"/>
<dbReference type="HOGENOM" id="CLU_074410_2_1_1"/>
<dbReference type="InParanoid" id="Q5ZKT6"/>
<dbReference type="OMA" id="CNFRPEH"/>
<dbReference type="OrthoDB" id="206354at2759"/>
<dbReference type="PhylomeDB" id="Q5ZKT6"/>
<dbReference type="TreeFam" id="TF106153"/>
<dbReference type="Reactome" id="R-GGA-8876725">
    <property type="pathway name" value="Protein methylation"/>
</dbReference>
<dbReference type="PRO" id="PR:Q5ZKT6"/>
<dbReference type="Proteomes" id="UP000000539">
    <property type="component" value="Chromosome 1"/>
</dbReference>
<dbReference type="Bgee" id="ENSGALG00000017133">
    <property type="expression patterns" value="Expressed in spermatid and 14 other cell types or tissues"/>
</dbReference>
<dbReference type="GO" id="GO:0005737">
    <property type="term" value="C:cytoplasm"/>
    <property type="evidence" value="ECO:0007669"/>
    <property type="project" value="UniProtKB-SubCell"/>
</dbReference>
<dbReference type="GO" id="GO:0008168">
    <property type="term" value="F:methyltransferase activity"/>
    <property type="evidence" value="ECO:0000250"/>
    <property type="project" value="UniProtKB"/>
</dbReference>
<dbReference type="GO" id="GO:0003676">
    <property type="term" value="F:nucleic acid binding"/>
    <property type="evidence" value="ECO:0007669"/>
    <property type="project" value="InterPro"/>
</dbReference>
<dbReference type="GO" id="GO:0016279">
    <property type="term" value="F:protein-lysine N-methyltransferase activity"/>
    <property type="evidence" value="ECO:0000250"/>
    <property type="project" value="UniProtKB"/>
</dbReference>
<dbReference type="GO" id="GO:0018022">
    <property type="term" value="P:peptidyl-lysine methylation"/>
    <property type="evidence" value="ECO:0000250"/>
    <property type="project" value="UniProtKB"/>
</dbReference>
<dbReference type="HAMAP" id="MF_03187">
    <property type="entry name" value="Methyltr_EFM5"/>
    <property type="match status" value="1"/>
</dbReference>
<dbReference type="InterPro" id="IPR002052">
    <property type="entry name" value="DNA_methylase_N6_adenine_CS"/>
</dbReference>
<dbReference type="InterPro" id="IPR019369">
    <property type="entry name" value="Efm5/EEF1AKMT1"/>
</dbReference>
<dbReference type="InterPro" id="IPR041370">
    <property type="entry name" value="Mlase_EEF1AKMT1/ZCCHC4"/>
</dbReference>
<dbReference type="InterPro" id="IPR029063">
    <property type="entry name" value="SAM-dependent_MTases_sf"/>
</dbReference>
<dbReference type="PANTHER" id="PTHR13200">
    <property type="entry name" value="EEF1A LYSINE METHYLTRANSFERASE 1"/>
    <property type="match status" value="1"/>
</dbReference>
<dbReference type="PANTHER" id="PTHR13200:SF0">
    <property type="entry name" value="EEF1A LYSINE METHYLTRANSFERASE 1"/>
    <property type="match status" value="1"/>
</dbReference>
<dbReference type="Pfam" id="PF10237">
    <property type="entry name" value="N6-adenineMlase"/>
    <property type="match status" value="1"/>
</dbReference>
<dbReference type="SUPFAM" id="SSF53335">
    <property type="entry name" value="S-adenosyl-L-methionine-dependent methyltransferases"/>
    <property type="match status" value="1"/>
</dbReference>
<reference key="1">
    <citation type="journal article" date="2005" name="Genome Biol.">
        <title>Full-length cDNAs from chicken bursal lymphocytes to facilitate gene function analysis.</title>
        <authorList>
            <person name="Caldwell R.B."/>
            <person name="Kierzek A.M."/>
            <person name="Arakawa H."/>
            <person name="Bezzubov Y."/>
            <person name="Zaim J."/>
            <person name="Fiedler P."/>
            <person name="Kutter S."/>
            <person name="Blagodatski A."/>
            <person name="Kostovska D."/>
            <person name="Koter M."/>
            <person name="Plachy J."/>
            <person name="Carninci P."/>
            <person name="Hayashizaki Y."/>
            <person name="Buerstedde J.-M."/>
        </authorList>
    </citation>
    <scope>NUCLEOTIDE SEQUENCE [LARGE SCALE MRNA]</scope>
    <source>
        <strain>CB</strain>
        <tissue>Bursa of Fabricius</tissue>
    </source>
</reference>
<organism>
    <name type="scientific">Gallus gallus</name>
    <name type="common">Chicken</name>
    <dbReference type="NCBI Taxonomy" id="9031"/>
    <lineage>
        <taxon>Eukaryota</taxon>
        <taxon>Metazoa</taxon>
        <taxon>Chordata</taxon>
        <taxon>Craniata</taxon>
        <taxon>Vertebrata</taxon>
        <taxon>Euteleostomi</taxon>
        <taxon>Archelosauria</taxon>
        <taxon>Archosauria</taxon>
        <taxon>Dinosauria</taxon>
        <taxon>Saurischia</taxon>
        <taxon>Theropoda</taxon>
        <taxon>Coelurosauria</taxon>
        <taxon>Aves</taxon>
        <taxon>Neognathae</taxon>
        <taxon>Galloanserae</taxon>
        <taxon>Galliformes</taxon>
        <taxon>Phasianidae</taxon>
        <taxon>Phasianinae</taxon>
        <taxon>Gallus</taxon>
    </lineage>
</organism>
<accession>Q5ZKT6</accession>
<evidence type="ECO:0000250" key="1">
    <source>
        <dbReference type="UniProtKB" id="Q8WVE0"/>
    </source>
</evidence>
<evidence type="ECO:0000255" key="2">
    <source>
        <dbReference type="HAMAP-Rule" id="MF_03187"/>
    </source>
</evidence>
<protein>
    <recommendedName>
        <fullName evidence="2">EEF1A lysine methyltransferase 1</fullName>
        <ecNumber evidence="2">2.1.1.-</ecNumber>
    </recommendedName>
    <alternativeName>
        <fullName evidence="2">N(6)-adenine-specific DNA methyltransferase 2</fullName>
    </alternativeName>
    <alternativeName>
        <fullName evidence="2">Protein-lysine N-methyltransferase N6AMT2</fullName>
    </alternativeName>
</protein>
<proteinExistence type="evidence at transcript level"/>